<organism>
    <name type="scientific">Mycobacterium leprae (strain TN)</name>
    <dbReference type="NCBI Taxonomy" id="272631"/>
    <lineage>
        <taxon>Bacteria</taxon>
        <taxon>Bacillati</taxon>
        <taxon>Actinomycetota</taxon>
        <taxon>Actinomycetes</taxon>
        <taxon>Mycobacteriales</taxon>
        <taxon>Mycobacteriaceae</taxon>
        <taxon>Mycobacterium</taxon>
    </lineage>
</organism>
<sequence>MLVRLVFAGTPESALPALCRLIDSPRHDVIAVLTRPDAASGRRGKPEPSPVAREALDRGIPLLRPARPNSPVFVSELSEWAPECCVVVAYGALLGSPLLAVPPRGWVNLHFSLLPAWRGAAPVQAAIAAGDTITGATTFQIEPSLDSGPVYGVVTETIQPTDTAGDLLERLAVSGATLLSSTLDGIADAILTPRQQPVDGVSFAPKITVEQARVCWDLPAPVVERRIRAVTPNPGAWTLVGKLRVKLGPVRFDSGAVEVPRLLKPLLPGGIHVDHKSVWIGTGSDPVRLSKVQPQGKKFMNAVDWAHGARLDPAARAS</sequence>
<reference key="1">
    <citation type="journal article" date="2001" name="Nature">
        <title>Massive gene decay in the leprosy bacillus.</title>
        <authorList>
            <person name="Cole S.T."/>
            <person name="Eiglmeier K."/>
            <person name="Parkhill J."/>
            <person name="James K.D."/>
            <person name="Thomson N.R."/>
            <person name="Wheeler P.R."/>
            <person name="Honore N."/>
            <person name="Garnier T."/>
            <person name="Churcher C.M."/>
            <person name="Harris D.E."/>
            <person name="Mungall K.L."/>
            <person name="Basham D."/>
            <person name="Brown D."/>
            <person name="Chillingworth T."/>
            <person name="Connor R."/>
            <person name="Davies R.M."/>
            <person name="Devlin K."/>
            <person name="Duthoy S."/>
            <person name="Feltwell T."/>
            <person name="Fraser A."/>
            <person name="Hamlin N."/>
            <person name="Holroyd S."/>
            <person name="Hornsby T."/>
            <person name="Jagels K."/>
            <person name="Lacroix C."/>
            <person name="Maclean J."/>
            <person name="Moule S."/>
            <person name="Murphy L.D."/>
            <person name="Oliver K."/>
            <person name="Quail M.A."/>
            <person name="Rajandream M.A."/>
            <person name="Rutherford K.M."/>
            <person name="Rutter S."/>
            <person name="Seeger K."/>
            <person name="Simon S."/>
            <person name="Simmonds M."/>
            <person name="Skelton J."/>
            <person name="Squares R."/>
            <person name="Squares S."/>
            <person name="Stevens K."/>
            <person name="Taylor K."/>
            <person name="Whitehead S."/>
            <person name="Woodward J.R."/>
            <person name="Barrell B.G."/>
        </authorList>
    </citation>
    <scope>NUCLEOTIDE SEQUENCE [LARGE SCALE GENOMIC DNA]</scope>
    <source>
        <strain>TN</strain>
    </source>
</reference>
<keyword id="KW-0648">Protein biosynthesis</keyword>
<keyword id="KW-1185">Reference proteome</keyword>
<keyword id="KW-0808">Transferase</keyword>
<gene>
    <name evidence="1" type="primary">fmt</name>
    <name type="ordered locus">ML0552</name>
</gene>
<protein>
    <recommendedName>
        <fullName evidence="1">Methionyl-tRNA formyltransferase</fullName>
        <ecNumber evidence="1">2.1.2.9</ecNumber>
    </recommendedName>
</protein>
<comment type="function">
    <text evidence="1">Attaches a formyl group to the free amino group of methionyl-tRNA(fMet). The formyl group appears to play a dual role in the initiator identity of N-formylmethionyl-tRNA by promoting its recognition by IF2 and preventing the misappropriation of this tRNA by the elongation apparatus.</text>
</comment>
<comment type="catalytic activity">
    <reaction evidence="1">
        <text>L-methionyl-tRNA(fMet) + (6R)-10-formyltetrahydrofolate = N-formyl-L-methionyl-tRNA(fMet) + (6S)-5,6,7,8-tetrahydrofolate + H(+)</text>
        <dbReference type="Rhea" id="RHEA:24380"/>
        <dbReference type="Rhea" id="RHEA-COMP:9952"/>
        <dbReference type="Rhea" id="RHEA-COMP:9953"/>
        <dbReference type="ChEBI" id="CHEBI:15378"/>
        <dbReference type="ChEBI" id="CHEBI:57453"/>
        <dbReference type="ChEBI" id="CHEBI:78530"/>
        <dbReference type="ChEBI" id="CHEBI:78844"/>
        <dbReference type="ChEBI" id="CHEBI:195366"/>
        <dbReference type="EC" id="2.1.2.9"/>
    </reaction>
</comment>
<comment type="similarity">
    <text evidence="1">Belongs to the Fmt family.</text>
</comment>
<name>FMT_MYCLE</name>
<proteinExistence type="inferred from homology"/>
<accession>Q9CCQ0</accession>
<dbReference type="EC" id="2.1.2.9" evidence="1"/>
<dbReference type="EMBL" id="AL583918">
    <property type="protein sequence ID" value="CAC30060.1"/>
    <property type="molecule type" value="Genomic_DNA"/>
</dbReference>
<dbReference type="PIR" id="H86977">
    <property type="entry name" value="H86977"/>
</dbReference>
<dbReference type="RefSeq" id="NP_301467.1">
    <property type="nucleotide sequence ID" value="NC_002677.1"/>
</dbReference>
<dbReference type="SMR" id="Q9CCQ0"/>
<dbReference type="STRING" id="272631.gene:17574373"/>
<dbReference type="KEGG" id="mle:ML0552"/>
<dbReference type="PATRIC" id="fig|272631.5.peg.959"/>
<dbReference type="Leproma" id="ML0552"/>
<dbReference type="eggNOG" id="COG0223">
    <property type="taxonomic scope" value="Bacteria"/>
</dbReference>
<dbReference type="HOGENOM" id="CLU_033347_2_0_11"/>
<dbReference type="OrthoDB" id="9802815at2"/>
<dbReference type="Proteomes" id="UP000000806">
    <property type="component" value="Chromosome"/>
</dbReference>
<dbReference type="GO" id="GO:0005829">
    <property type="term" value="C:cytosol"/>
    <property type="evidence" value="ECO:0007669"/>
    <property type="project" value="TreeGrafter"/>
</dbReference>
<dbReference type="GO" id="GO:0004479">
    <property type="term" value="F:methionyl-tRNA formyltransferase activity"/>
    <property type="evidence" value="ECO:0007669"/>
    <property type="project" value="UniProtKB-UniRule"/>
</dbReference>
<dbReference type="CDD" id="cd08646">
    <property type="entry name" value="FMT_core_Met-tRNA-FMT_N"/>
    <property type="match status" value="1"/>
</dbReference>
<dbReference type="CDD" id="cd08704">
    <property type="entry name" value="Met_tRNA_FMT_C"/>
    <property type="match status" value="1"/>
</dbReference>
<dbReference type="FunFam" id="3.40.50.12230:FF:000001">
    <property type="entry name" value="Methionyl-tRNA formyltransferase"/>
    <property type="match status" value="1"/>
</dbReference>
<dbReference type="Gene3D" id="3.40.50.12230">
    <property type="match status" value="1"/>
</dbReference>
<dbReference type="HAMAP" id="MF_00182">
    <property type="entry name" value="Formyl_trans"/>
    <property type="match status" value="1"/>
</dbReference>
<dbReference type="InterPro" id="IPR005794">
    <property type="entry name" value="Fmt"/>
</dbReference>
<dbReference type="InterPro" id="IPR005793">
    <property type="entry name" value="Formyl_trans_C"/>
</dbReference>
<dbReference type="InterPro" id="IPR002376">
    <property type="entry name" value="Formyl_transf_N"/>
</dbReference>
<dbReference type="InterPro" id="IPR036477">
    <property type="entry name" value="Formyl_transf_N_sf"/>
</dbReference>
<dbReference type="InterPro" id="IPR011034">
    <property type="entry name" value="Formyl_transferase-like_C_sf"/>
</dbReference>
<dbReference type="InterPro" id="IPR044135">
    <property type="entry name" value="Met-tRNA-FMT_C"/>
</dbReference>
<dbReference type="InterPro" id="IPR041711">
    <property type="entry name" value="Met-tRNA-FMT_N"/>
</dbReference>
<dbReference type="NCBIfam" id="TIGR00460">
    <property type="entry name" value="fmt"/>
    <property type="match status" value="1"/>
</dbReference>
<dbReference type="PANTHER" id="PTHR11138">
    <property type="entry name" value="METHIONYL-TRNA FORMYLTRANSFERASE"/>
    <property type="match status" value="1"/>
</dbReference>
<dbReference type="PANTHER" id="PTHR11138:SF5">
    <property type="entry name" value="METHIONYL-TRNA FORMYLTRANSFERASE, MITOCHONDRIAL"/>
    <property type="match status" value="1"/>
</dbReference>
<dbReference type="Pfam" id="PF02911">
    <property type="entry name" value="Formyl_trans_C"/>
    <property type="match status" value="1"/>
</dbReference>
<dbReference type="Pfam" id="PF00551">
    <property type="entry name" value="Formyl_trans_N"/>
    <property type="match status" value="1"/>
</dbReference>
<dbReference type="SUPFAM" id="SSF50486">
    <property type="entry name" value="FMT C-terminal domain-like"/>
    <property type="match status" value="1"/>
</dbReference>
<dbReference type="SUPFAM" id="SSF53328">
    <property type="entry name" value="Formyltransferase"/>
    <property type="match status" value="1"/>
</dbReference>
<feature type="chain" id="PRO_0000082999" description="Methionyl-tRNA formyltransferase">
    <location>
        <begin position="1"/>
        <end position="318"/>
    </location>
</feature>
<feature type="binding site" evidence="1">
    <location>
        <begin position="112"/>
        <end position="115"/>
    </location>
    <ligand>
        <name>(6S)-5,6,7,8-tetrahydrofolate</name>
        <dbReference type="ChEBI" id="CHEBI:57453"/>
    </ligand>
</feature>
<evidence type="ECO:0000255" key="1">
    <source>
        <dbReference type="HAMAP-Rule" id="MF_00182"/>
    </source>
</evidence>